<accession>P33562</accession>
<feature type="chain" id="PRO_0000077290" description="Type II restriction enzyme BsuBI">
    <location>
        <begin position="1"/>
        <end position="316"/>
    </location>
</feature>
<dbReference type="EC" id="3.1.21.4" evidence="1"/>
<dbReference type="EMBL" id="L01541">
    <property type="protein sequence ID" value="AAA18170.1"/>
    <property type="molecule type" value="Genomic_DNA"/>
</dbReference>
<dbReference type="PIR" id="S35516">
    <property type="entry name" value="S35516"/>
</dbReference>
<dbReference type="RefSeq" id="WP_213414733.1">
    <property type="nucleotide sequence ID" value="NZ_OX419578.1"/>
</dbReference>
<dbReference type="SMR" id="P33562"/>
<dbReference type="REBASE" id="616">
    <property type="entry name" value="BsuBI"/>
</dbReference>
<dbReference type="PRO" id="PR:P33562"/>
<dbReference type="GO" id="GO:0003677">
    <property type="term" value="F:DNA binding"/>
    <property type="evidence" value="ECO:0007669"/>
    <property type="project" value="InterPro"/>
</dbReference>
<dbReference type="GO" id="GO:0000287">
    <property type="term" value="F:magnesium ion binding"/>
    <property type="evidence" value="ECO:0007669"/>
    <property type="project" value="InterPro"/>
</dbReference>
<dbReference type="GO" id="GO:0009036">
    <property type="term" value="F:type II site-specific deoxyribonuclease activity"/>
    <property type="evidence" value="ECO:0007669"/>
    <property type="project" value="UniProtKB-EC"/>
</dbReference>
<dbReference type="GO" id="GO:0009307">
    <property type="term" value="P:DNA restriction-modification system"/>
    <property type="evidence" value="ECO:0007669"/>
    <property type="project" value="UniProtKB-KW"/>
</dbReference>
<dbReference type="Gene3D" id="3.40.1350.80">
    <property type="match status" value="1"/>
</dbReference>
<dbReference type="Gene3D" id="1.10.10.1820">
    <property type="entry name" value="BsuBI/PstI restriction endonuclease-like"/>
    <property type="match status" value="1"/>
</dbReference>
<dbReference type="InterPro" id="IPR041963">
    <property type="entry name" value="BsuBI/PstI_C_sf"/>
</dbReference>
<dbReference type="InterPro" id="IPR041454">
    <property type="entry name" value="BsuBI/PstI_N"/>
</dbReference>
<dbReference type="InterPro" id="IPR041962">
    <property type="entry name" value="BsuBI/PstI_N_sf"/>
</dbReference>
<dbReference type="InterPro" id="IPR009528">
    <property type="entry name" value="Restrct_endonuc_II_BsuBI_C"/>
</dbReference>
<dbReference type="Pfam" id="PF06616">
    <property type="entry name" value="BsuBI_PstI_RE"/>
    <property type="match status" value="1"/>
</dbReference>
<dbReference type="Pfam" id="PF17728">
    <property type="entry name" value="BsuBI_PstI_RE_N"/>
    <property type="match status" value="1"/>
</dbReference>
<reference key="1">
    <citation type="journal article" date="1992" name="Nucleic Acids Res.">
        <title>BsuBI -- an isospecific restriction and modification system of PstI: characterization of the BsuBI genes and enzymes.</title>
        <authorList>
            <person name="Xu G.-L."/>
            <person name="Kapfer W."/>
            <person name="Walter J."/>
            <person name="Trautner T.A."/>
        </authorList>
    </citation>
    <scope>NUCLEOTIDE SEQUENCE [GENOMIC DNA]</scope>
    <scope>FUNCTION</scope>
    <scope>CATALYTIC ACTIVITY</scope>
    <source>
        <strain>ISB8</strain>
    </source>
</reference>
<reference key="2">
    <citation type="journal article" date="2003" name="Nucleic Acids Res.">
        <title>A nomenclature for restriction enzymes, DNA methyltransferases, homing endonucleases and their genes.</title>
        <authorList>
            <person name="Roberts R.J."/>
            <person name="Belfort M."/>
            <person name="Bestor T."/>
            <person name="Bhagwat A.S."/>
            <person name="Bickle T.A."/>
            <person name="Bitinaite J."/>
            <person name="Blumenthal R.M."/>
            <person name="Degtyarev S.K."/>
            <person name="Dryden D.T."/>
            <person name="Dybvig K."/>
            <person name="Firman K."/>
            <person name="Gromova E.S."/>
            <person name="Gumport R.I."/>
            <person name="Halford S.E."/>
            <person name="Hattman S."/>
            <person name="Heitman J."/>
            <person name="Hornby D.P."/>
            <person name="Janulaitis A."/>
            <person name="Jeltsch A."/>
            <person name="Josephsen J."/>
            <person name="Kiss A."/>
            <person name="Klaenhammer T.R."/>
            <person name="Kobayashi I."/>
            <person name="Kong H."/>
            <person name="Krueger D.H."/>
            <person name="Lacks S."/>
            <person name="Marinus M.G."/>
            <person name="Miyahara M."/>
            <person name="Morgan R.D."/>
            <person name="Murray N.E."/>
            <person name="Nagaraja V."/>
            <person name="Piekarowicz A."/>
            <person name="Pingoud A."/>
            <person name="Raleigh E."/>
            <person name="Rao D.N."/>
            <person name="Reich N."/>
            <person name="Repin V.E."/>
            <person name="Selker E.U."/>
            <person name="Shaw P.C."/>
            <person name="Stein D.C."/>
            <person name="Stoddard B.L."/>
            <person name="Szybalski W."/>
            <person name="Trautner T.A."/>
            <person name="Van Etten J.L."/>
            <person name="Vitor J.M."/>
            <person name="Wilson G.G."/>
            <person name="Xu S.Y."/>
        </authorList>
    </citation>
    <scope>NOMENCLATURE</scope>
    <scope>SUBTYPE</scope>
</reference>
<name>T2BB_BACIU</name>
<protein>
    <recommendedName>
        <fullName evidence="2">Type II restriction enzyme BsuBI</fullName>
        <shortName>R.BsuBI</shortName>
        <ecNumber evidence="1">3.1.21.4</ecNumber>
    </recommendedName>
    <alternativeName>
        <fullName>Endonuclease BsuBI</fullName>
    </alternativeName>
    <alternativeName>
        <fullName>Type-2 restriction enzyme BsuBI</fullName>
    </alternativeName>
</protein>
<gene>
    <name type="primary">hsdBR</name>
    <name type="synonym">hsrB</name>
</gene>
<sequence>MTEGMHSNVKEAIKILKELGLPKGQQNERSALCLLSLMNITQDKTWSEAESPLIGITPMMEFCRINYGKEYAPNSRETFRRFTMHQFVDAGIALYNPDKPTRPVNSPKAVYQIEAETLELIKCYNTEEWSELLARYLSNRQTLVERYAKERQQNKIPVQIAEGKEIYITPGEHSELIKAIIEEFAPRYVPGGRLIYAGDTGEKMGYFDEELLRQLGVVIDSHGKMPDVVIYFPEKKWLLLIESVTSHGPVDHKRHEELAKLFNGSTAGIVYVTAFPNRSLMARYLNNISWETEVWVADAPSHLIHFNGVRFLGPYE</sequence>
<organism>
    <name type="scientific">Bacillus subtilis</name>
    <dbReference type="NCBI Taxonomy" id="1423"/>
    <lineage>
        <taxon>Bacteria</taxon>
        <taxon>Bacillati</taxon>
        <taxon>Bacillota</taxon>
        <taxon>Bacilli</taxon>
        <taxon>Bacillales</taxon>
        <taxon>Bacillaceae</taxon>
        <taxon>Bacillus</taxon>
    </lineage>
</organism>
<keyword id="KW-0255">Endonuclease</keyword>
<keyword id="KW-0378">Hydrolase</keyword>
<keyword id="KW-0460">Magnesium</keyword>
<keyword id="KW-0540">Nuclease</keyword>
<keyword id="KW-0680">Restriction system</keyword>
<comment type="function">
    <text evidence="1 2">A P subtype restriction enzyme that recognizes the double-stranded sequence 5'-CTGCAG-3' and cleaves after A-5.</text>
</comment>
<comment type="catalytic activity">
    <reaction evidence="1">
        <text>Endonucleolytic cleavage of DNA to give specific double-stranded fragments with terminal 5'-phosphates.</text>
        <dbReference type="EC" id="3.1.21.4"/>
    </reaction>
</comment>
<comment type="cofactor">
    <cofactor>
        <name>Mg(2+)</name>
        <dbReference type="ChEBI" id="CHEBI:18420"/>
    </cofactor>
</comment>
<comment type="subunit">
    <text>Homodimer.</text>
</comment>
<comment type="similarity">
    <text evidence="3">Belongs to the BsuBI/PstI type II restriction endonuclease family.</text>
</comment>
<proteinExistence type="evidence at protein level"/>
<evidence type="ECO:0000269" key="1">
    <source>
    </source>
</evidence>
<evidence type="ECO:0000303" key="2">
    <source>
    </source>
</evidence>
<evidence type="ECO:0000305" key="3"/>